<protein>
    <recommendedName>
        <fullName>Beta-Ala-His dipeptidase</fullName>
        <ecNumber evidence="5 6">3.4.13.20</ecNumber>
    </recommendedName>
    <alternativeName>
        <fullName>CNDP dipeptidase 1</fullName>
    </alternativeName>
    <alternativeName>
        <fullName>Carnosine dipeptidase 1</fullName>
    </alternativeName>
</protein>
<accession>Q8BUG2</accession>
<accession>Q80XP5</accession>
<feature type="chain" id="PRO_0000250530" description="Beta-Ala-His dipeptidase">
    <location>
        <begin position="1"/>
        <end position="492"/>
    </location>
</feature>
<feature type="active site" evidence="1">
    <location>
        <position position="109"/>
    </location>
</feature>
<feature type="active site" description="Proton acceptor" evidence="1">
    <location>
        <position position="174"/>
    </location>
</feature>
<feature type="binding site" evidence="3">
    <location>
        <position position="107"/>
    </location>
    <ligand>
        <name>Zn(2+)</name>
        <dbReference type="ChEBI" id="CHEBI:29105"/>
        <label>2</label>
    </ligand>
</feature>
<feature type="binding site" evidence="3">
    <location>
        <position position="140"/>
    </location>
    <ligand>
        <name>Zn(2+)</name>
        <dbReference type="ChEBI" id="CHEBI:29105"/>
        <label>1</label>
    </ligand>
</feature>
<feature type="binding site" evidence="3">
    <location>
        <position position="140"/>
    </location>
    <ligand>
        <name>Zn(2+)</name>
        <dbReference type="ChEBI" id="CHEBI:29105"/>
        <label>2</label>
    </ligand>
</feature>
<feature type="binding site" evidence="3">
    <location>
        <position position="175"/>
    </location>
    <ligand>
        <name>Zn(2+)</name>
        <dbReference type="ChEBI" id="CHEBI:29105"/>
        <label>1</label>
    </ligand>
</feature>
<feature type="binding site" evidence="3">
    <location>
        <position position="203"/>
    </location>
    <ligand>
        <name>Zn(2+)</name>
        <dbReference type="ChEBI" id="CHEBI:29105"/>
        <label>2</label>
    </ligand>
</feature>
<feature type="binding site" evidence="3">
    <location>
        <position position="453"/>
    </location>
    <ligand>
        <name>Zn(2+)</name>
        <dbReference type="ChEBI" id="CHEBI:29105"/>
        <label>1</label>
    </ligand>
</feature>
<feature type="modified residue" description="Phosphoserine" evidence="2">
    <location>
        <position position="194"/>
    </location>
</feature>
<feature type="sequence conflict" description="In Ref. 2; AAH43305." evidence="7" ref="2">
    <original>F</original>
    <variation>L</variation>
    <location>
        <position position="168"/>
    </location>
</feature>
<proteinExistence type="evidence at protein level"/>
<organism>
    <name type="scientific">Mus musculus</name>
    <name type="common">Mouse</name>
    <dbReference type="NCBI Taxonomy" id="10090"/>
    <lineage>
        <taxon>Eukaryota</taxon>
        <taxon>Metazoa</taxon>
        <taxon>Chordata</taxon>
        <taxon>Craniata</taxon>
        <taxon>Vertebrata</taxon>
        <taxon>Euteleostomi</taxon>
        <taxon>Mammalia</taxon>
        <taxon>Eutheria</taxon>
        <taxon>Euarchontoglires</taxon>
        <taxon>Glires</taxon>
        <taxon>Rodentia</taxon>
        <taxon>Myomorpha</taxon>
        <taxon>Muroidea</taxon>
        <taxon>Muridae</taxon>
        <taxon>Murinae</taxon>
        <taxon>Mus</taxon>
        <taxon>Mus</taxon>
    </lineage>
</organism>
<comment type="function">
    <text evidence="5 6">Catalyzes the peptide bond hydrolysis in Xaa-His dipeptides, displaying the highest activity toward carnosine (beta-alanyl-L-histidine) and anserine (beta-alanyl-3-methyl-histidine).</text>
</comment>
<comment type="catalytic activity">
    <reaction evidence="5 6">
        <text>Preferential hydrolysis of the beta-Ala-|-His dipeptide (carnosine), and also anserine, Xaa-|-His dipeptides and other dipeptides including homocarnosine.</text>
        <dbReference type="EC" id="3.4.13.20"/>
    </reaction>
</comment>
<comment type="catalytic activity">
    <reaction evidence="5 6">
        <text>carnosine + H2O = beta-alanine + L-histidine</text>
        <dbReference type="Rhea" id="RHEA:59360"/>
        <dbReference type="ChEBI" id="CHEBI:15377"/>
        <dbReference type="ChEBI" id="CHEBI:57485"/>
        <dbReference type="ChEBI" id="CHEBI:57595"/>
        <dbReference type="ChEBI" id="CHEBI:57966"/>
        <dbReference type="EC" id="3.4.13.20"/>
    </reaction>
    <physiologicalReaction direction="left-to-right" evidence="6">
        <dbReference type="Rhea" id="RHEA:59361"/>
    </physiologicalReaction>
</comment>
<comment type="catalytic activity">
    <reaction evidence="3">
        <text>anserine + H2O = N(pros)-methyl-L-histidine + beta-alanine</text>
        <dbReference type="Rhea" id="RHEA:59576"/>
        <dbReference type="ChEBI" id="CHEBI:15377"/>
        <dbReference type="ChEBI" id="CHEBI:57966"/>
        <dbReference type="ChEBI" id="CHEBI:58445"/>
        <dbReference type="ChEBI" id="CHEBI:143076"/>
        <dbReference type="EC" id="3.4.13.20"/>
    </reaction>
    <physiologicalReaction direction="left-to-right" evidence="3">
        <dbReference type="Rhea" id="RHEA:59577"/>
    </physiologicalReaction>
</comment>
<comment type="catalytic activity">
    <reaction evidence="3">
        <text>L-alanyl-L-histidine + H2O = L-histidine + L-alanine</text>
        <dbReference type="Rhea" id="RHEA:37283"/>
        <dbReference type="ChEBI" id="CHEBI:15377"/>
        <dbReference type="ChEBI" id="CHEBI:57595"/>
        <dbReference type="ChEBI" id="CHEBI:57972"/>
        <dbReference type="ChEBI" id="CHEBI:74388"/>
    </reaction>
    <physiologicalReaction direction="left-to-right" evidence="3">
        <dbReference type="Rhea" id="RHEA:37284"/>
    </physiologicalReaction>
</comment>
<comment type="catalytic activity">
    <reaction evidence="3">
        <text>glycyl-L-histidine + H2O = L-histidine + glycine</text>
        <dbReference type="Rhea" id="RHEA:67376"/>
        <dbReference type="ChEBI" id="CHEBI:15377"/>
        <dbReference type="ChEBI" id="CHEBI:57305"/>
        <dbReference type="ChEBI" id="CHEBI:57595"/>
        <dbReference type="ChEBI" id="CHEBI:169956"/>
    </reaction>
    <physiologicalReaction direction="left-to-right" evidence="3">
        <dbReference type="Rhea" id="RHEA:67377"/>
    </physiologicalReaction>
</comment>
<comment type="catalytic activity">
    <reaction evidence="5">
        <text>L-homocarnosine + H2O = 4-aminobutanoate + L-histidine</text>
        <dbReference type="Rhea" id="RHEA:59572"/>
        <dbReference type="ChEBI" id="CHEBI:15377"/>
        <dbReference type="ChEBI" id="CHEBI:57595"/>
        <dbReference type="ChEBI" id="CHEBI:59888"/>
        <dbReference type="ChEBI" id="CHEBI:143075"/>
        <dbReference type="EC" id="3.4.13.20"/>
    </reaction>
    <physiologicalReaction direction="left-to-right" evidence="8">
        <dbReference type="Rhea" id="RHEA:59573"/>
    </physiologicalReaction>
</comment>
<comment type="cofactor">
    <cofactor evidence="3">
        <name>Zn(2+)</name>
        <dbReference type="ChEBI" id="CHEBI:29105"/>
    </cofactor>
    <text evidence="3">Binds 2 Zn(2+) ions per subunit.</text>
</comment>
<comment type="biophysicochemical properties">
    <kinetics>
        <KM evidence="5">0.28 mM for carnosine</KM>
        <KM evidence="5">1.78 mM for homocarnosine</KM>
        <Vmax evidence="5">4.8 umol/min/mg enzyme toward carnosine</Vmax>
        <Vmax evidence="5">0.086 umol/min/mg enzyme toward homocarnosine</Vmax>
    </kinetics>
</comment>
<comment type="subunit">
    <text evidence="3">Homodimer.</text>
</comment>
<comment type="subcellular location">
    <subcellularLocation>
        <location evidence="3">Secreted</location>
    </subcellularLocation>
</comment>
<comment type="tissue specificity">
    <text evidence="4">Detected exclusively in kidney.</text>
</comment>
<comment type="similarity">
    <text evidence="7">Belongs to the peptidase M20A family.</text>
</comment>
<comment type="caution">
    <text evidence="7">In contrast to human counterpart, it lacks a signal sequence.</text>
</comment>
<name>CNDP1_MOUSE</name>
<keyword id="KW-0121">Carboxypeptidase</keyword>
<keyword id="KW-0378">Hydrolase</keyword>
<keyword id="KW-0479">Metal-binding</keyword>
<keyword id="KW-0482">Metalloprotease</keyword>
<keyword id="KW-0597">Phosphoprotein</keyword>
<keyword id="KW-0645">Protease</keyword>
<keyword id="KW-1185">Reference proteome</keyword>
<keyword id="KW-0964">Secreted</keyword>
<keyword id="KW-0862">Zinc</keyword>
<dbReference type="EC" id="3.4.13.20" evidence="5 6"/>
<dbReference type="EMBL" id="AK085308">
    <property type="protein sequence ID" value="BAC39417.1"/>
    <property type="molecule type" value="mRNA"/>
</dbReference>
<dbReference type="EMBL" id="BC043305">
    <property type="protein sequence ID" value="AAH43305.1"/>
    <property type="molecule type" value="mRNA"/>
</dbReference>
<dbReference type="CCDS" id="CCDS29382.1"/>
<dbReference type="RefSeq" id="NP_803233.2">
    <property type="nucleotide sequence ID" value="NM_177450.4"/>
</dbReference>
<dbReference type="SMR" id="Q8BUG2"/>
<dbReference type="FunCoup" id="Q8BUG2">
    <property type="interactions" value="195"/>
</dbReference>
<dbReference type="STRING" id="10090.ENSMUSP00000069699"/>
<dbReference type="MEROPS" id="M20.006"/>
<dbReference type="PhosphoSitePlus" id="Q8BUG2"/>
<dbReference type="PaxDb" id="10090-ENSMUSP00000069699"/>
<dbReference type="PeptideAtlas" id="Q8BUG2"/>
<dbReference type="ProteomicsDB" id="283647"/>
<dbReference type="DNASU" id="338403"/>
<dbReference type="GeneID" id="338403"/>
<dbReference type="KEGG" id="mmu:338403"/>
<dbReference type="UCSC" id="uc008fur.2">
    <property type="organism name" value="mouse"/>
</dbReference>
<dbReference type="AGR" id="MGI:2451097"/>
<dbReference type="CTD" id="84735"/>
<dbReference type="MGI" id="MGI:2451097">
    <property type="gene designation" value="Cndp1"/>
</dbReference>
<dbReference type="eggNOG" id="KOG2276">
    <property type="taxonomic scope" value="Eukaryota"/>
</dbReference>
<dbReference type="InParanoid" id="Q8BUG2"/>
<dbReference type="OrthoDB" id="7832001at2759"/>
<dbReference type="PhylomeDB" id="Q8BUG2"/>
<dbReference type="TreeFam" id="TF300633"/>
<dbReference type="BRENDA" id="3.4.13.20">
    <property type="organism ID" value="3474"/>
</dbReference>
<dbReference type="BioGRID-ORCS" id="338403">
    <property type="hits" value="1 hit in 79 CRISPR screens"/>
</dbReference>
<dbReference type="PRO" id="PR:Q8BUG2"/>
<dbReference type="Proteomes" id="UP000000589">
    <property type="component" value="Unplaced"/>
</dbReference>
<dbReference type="RNAct" id="Q8BUG2">
    <property type="molecule type" value="protein"/>
</dbReference>
<dbReference type="GO" id="GO:0005829">
    <property type="term" value="C:cytosol"/>
    <property type="evidence" value="ECO:0000314"/>
    <property type="project" value="MGI"/>
</dbReference>
<dbReference type="GO" id="GO:0005576">
    <property type="term" value="C:extracellular region"/>
    <property type="evidence" value="ECO:0007669"/>
    <property type="project" value="UniProtKB-SubCell"/>
</dbReference>
<dbReference type="GO" id="GO:0004180">
    <property type="term" value="F:carboxypeptidase activity"/>
    <property type="evidence" value="ECO:0007669"/>
    <property type="project" value="UniProtKB-KW"/>
</dbReference>
<dbReference type="GO" id="GO:0016805">
    <property type="term" value="F:dipeptidase activity"/>
    <property type="evidence" value="ECO:0000314"/>
    <property type="project" value="MGI"/>
</dbReference>
<dbReference type="GO" id="GO:0046872">
    <property type="term" value="F:metal ion binding"/>
    <property type="evidence" value="ECO:0007669"/>
    <property type="project" value="UniProtKB-KW"/>
</dbReference>
<dbReference type="GO" id="GO:0070573">
    <property type="term" value="F:metallodipeptidase activity"/>
    <property type="evidence" value="ECO:0007669"/>
    <property type="project" value="InterPro"/>
</dbReference>
<dbReference type="GO" id="GO:0006508">
    <property type="term" value="P:proteolysis"/>
    <property type="evidence" value="ECO:0000314"/>
    <property type="project" value="MGI"/>
</dbReference>
<dbReference type="GO" id="GO:0051246">
    <property type="term" value="P:regulation of protein metabolic process"/>
    <property type="evidence" value="ECO:0000314"/>
    <property type="project" value="MGI"/>
</dbReference>
<dbReference type="CDD" id="cd05676">
    <property type="entry name" value="M20_dipept_like_CNDP"/>
    <property type="match status" value="1"/>
</dbReference>
<dbReference type="FunFam" id="3.30.70.360:FF:000008">
    <property type="entry name" value="Cytosolic non-specific dipeptidase"/>
    <property type="match status" value="1"/>
</dbReference>
<dbReference type="FunFam" id="3.40.630.10:FF:000014">
    <property type="entry name" value="Cytosolic non-specific dipeptidase"/>
    <property type="match status" value="1"/>
</dbReference>
<dbReference type="Gene3D" id="3.30.70.360">
    <property type="match status" value="1"/>
</dbReference>
<dbReference type="Gene3D" id="3.40.630.10">
    <property type="entry name" value="Zn peptidases"/>
    <property type="match status" value="1"/>
</dbReference>
<dbReference type="InterPro" id="IPR001261">
    <property type="entry name" value="ArgE/DapE_CS"/>
</dbReference>
<dbReference type="InterPro" id="IPR017153">
    <property type="entry name" value="CNDP/DUG1"/>
</dbReference>
<dbReference type="InterPro" id="IPR051458">
    <property type="entry name" value="Cyt/Met_Dipeptidase"/>
</dbReference>
<dbReference type="InterPro" id="IPR002933">
    <property type="entry name" value="Peptidase_M20"/>
</dbReference>
<dbReference type="InterPro" id="IPR011650">
    <property type="entry name" value="Peptidase_M20_dimer"/>
</dbReference>
<dbReference type="PANTHER" id="PTHR43270">
    <property type="entry name" value="BETA-ALA-HIS DIPEPTIDASE"/>
    <property type="match status" value="1"/>
</dbReference>
<dbReference type="PANTHER" id="PTHR43270:SF1">
    <property type="entry name" value="BETA-ALA-HIS DIPEPTIDASE"/>
    <property type="match status" value="1"/>
</dbReference>
<dbReference type="Pfam" id="PF07687">
    <property type="entry name" value="M20_dimer"/>
    <property type="match status" value="1"/>
</dbReference>
<dbReference type="Pfam" id="PF01546">
    <property type="entry name" value="Peptidase_M20"/>
    <property type="match status" value="1"/>
</dbReference>
<dbReference type="PIRSF" id="PIRSF037242">
    <property type="entry name" value="CNDP_dipeptidase"/>
    <property type="match status" value="1"/>
</dbReference>
<dbReference type="SUPFAM" id="SSF53187">
    <property type="entry name" value="Zn-dependent exopeptidases"/>
    <property type="match status" value="1"/>
</dbReference>
<dbReference type="PROSITE" id="PS00759">
    <property type="entry name" value="ARGE_DAPE_CPG2_2"/>
    <property type="match status" value="1"/>
</dbReference>
<sequence>MFSSAHSGLLEKLFHYIDLHQDEFVQTLKEWVAIESDSVQPVPRLRQKLFQMMALAADKLRNLGAGVESIDLGSQQMPDGQSLPIPPILLAELGSDPEKPTVCFYGHLDVQPAQKDDGWLTDPYTLTEVDGKLYGRGATDNKGPVLAWINAVSTFRALQQDLPVNIKFILEGMEEAGSIALEELVMREKDHFFSSVDYIVISDNLWLSQRKPALTYGTRGNCYFTVEVKCRDQDFHSGTFGGILNEPMADLVALLGSLVDSSGHILIPGIYDQMAPITEGEKTMYKNIDMDLEEYQNINQVEKFLFDTKEELLMHLWRYPSLSIHGIEGAFDEPGTKTVIPGRVLGKFSIRLVPTMSPSVVEKQVTQHLEAVFSKRNSFNKMAVSMVLGLHPWTANVNDTQYLAAQRTIKTVFGVNPDMIRDGSTIPIAKIFQAITQKSVMMLPLGAVDDGEHSQNEKINRWNYIQGSKLFAAFFLELSKQHSGHQMPSSVY</sequence>
<gene>
    <name type="primary">Cndp1</name>
    <name type="synonym">Cn1</name>
</gene>
<evidence type="ECO:0000250" key="1"/>
<evidence type="ECO:0000250" key="2">
    <source>
        <dbReference type="UniProtKB" id="Q66HG3"/>
    </source>
</evidence>
<evidence type="ECO:0000250" key="3">
    <source>
        <dbReference type="UniProtKB" id="Q96KN2"/>
    </source>
</evidence>
<evidence type="ECO:0000269" key="4">
    <source>
    </source>
</evidence>
<evidence type="ECO:0000269" key="5">
    <source>
    </source>
</evidence>
<evidence type="ECO:0000269" key="6">
    <source>
    </source>
</evidence>
<evidence type="ECO:0000305" key="7"/>
<evidence type="ECO:0000305" key="8">
    <source>
    </source>
</evidence>
<reference key="1">
    <citation type="journal article" date="2005" name="Science">
        <title>The transcriptional landscape of the mammalian genome.</title>
        <authorList>
            <person name="Carninci P."/>
            <person name="Kasukawa T."/>
            <person name="Katayama S."/>
            <person name="Gough J."/>
            <person name="Frith M.C."/>
            <person name="Maeda N."/>
            <person name="Oyama R."/>
            <person name="Ravasi T."/>
            <person name="Lenhard B."/>
            <person name="Wells C."/>
            <person name="Kodzius R."/>
            <person name="Shimokawa K."/>
            <person name="Bajic V.B."/>
            <person name="Brenner S.E."/>
            <person name="Batalov S."/>
            <person name="Forrest A.R."/>
            <person name="Zavolan M."/>
            <person name="Davis M.J."/>
            <person name="Wilming L.G."/>
            <person name="Aidinis V."/>
            <person name="Allen J.E."/>
            <person name="Ambesi-Impiombato A."/>
            <person name="Apweiler R."/>
            <person name="Aturaliya R.N."/>
            <person name="Bailey T.L."/>
            <person name="Bansal M."/>
            <person name="Baxter L."/>
            <person name="Beisel K.W."/>
            <person name="Bersano T."/>
            <person name="Bono H."/>
            <person name="Chalk A.M."/>
            <person name="Chiu K.P."/>
            <person name="Choudhary V."/>
            <person name="Christoffels A."/>
            <person name="Clutterbuck D.R."/>
            <person name="Crowe M.L."/>
            <person name="Dalla E."/>
            <person name="Dalrymple B.P."/>
            <person name="de Bono B."/>
            <person name="Della Gatta G."/>
            <person name="di Bernardo D."/>
            <person name="Down T."/>
            <person name="Engstrom P."/>
            <person name="Fagiolini M."/>
            <person name="Faulkner G."/>
            <person name="Fletcher C.F."/>
            <person name="Fukushima T."/>
            <person name="Furuno M."/>
            <person name="Futaki S."/>
            <person name="Gariboldi M."/>
            <person name="Georgii-Hemming P."/>
            <person name="Gingeras T.R."/>
            <person name="Gojobori T."/>
            <person name="Green R.E."/>
            <person name="Gustincich S."/>
            <person name="Harbers M."/>
            <person name="Hayashi Y."/>
            <person name="Hensch T.K."/>
            <person name="Hirokawa N."/>
            <person name="Hill D."/>
            <person name="Huminiecki L."/>
            <person name="Iacono M."/>
            <person name="Ikeo K."/>
            <person name="Iwama A."/>
            <person name="Ishikawa T."/>
            <person name="Jakt M."/>
            <person name="Kanapin A."/>
            <person name="Katoh M."/>
            <person name="Kawasawa Y."/>
            <person name="Kelso J."/>
            <person name="Kitamura H."/>
            <person name="Kitano H."/>
            <person name="Kollias G."/>
            <person name="Krishnan S.P."/>
            <person name="Kruger A."/>
            <person name="Kummerfeld S.K."/>
            <person name="Kurochkin I.V."/>
            <person name="Lareau L.F."/>
            <person name="Lazarevic D."/>
            <person name="Lipovich L."/>
            <person name="Liu J."/>
            <person name="Liuni S."/>
            <person name="McWilliam S."/>
            <person name="Madan Babu M."/>
            <person name="Madera M."/>
            <person name="Marchionni L."/>
            <person name="Matsuda H."/>
            <person name="Matsuzawa S."/>
            <person name="Miki H."/>
            <person name="Mignone F."/>
            <person name="Miyake S."/>
            <person name="Morris K."/>
            <person name="Mottagui-Tabar S."/>
            <person name="Mulder N."/>
            <person name="Nakano N."/>
            <person name="Nakauchi H."/>
            <person name="Ng P."/>
            <person name="Nilsson R."/>
            <person name="Nishiguchi S."/>
            <person name="Nishikawa S."/>
            <person name="Nori F."/>
            <person name="Ohara O."/>
            <person name="Okazaki Y."/>
            <person name="Orlando V."/>
            <person name="Pang K.C."/>
            <person name="Pavan W.J."/>
            <person name="Pavesi G."/>
            <person name="Pesole G."/>
            <person name="Petrovsky N."/>
            <person name="Piazza S."/>
            <person name="Reed J."/>
            <person name="Reid J.F."/>
            <person name="Ring B.Z."/>
            <person name="Ringwald M."/>
            <person name="Rost B."/>
            <person name="Ruan Y."/>
            <person name="Salzberg S.L."/>
            <person name="Sandelin A."/>
            <person name="Schneider C."/>
            <person name="Schoenbach C."/>
            <person name="Sekiguchi K."/>
            <person name="Semple C.A."/>
            <person name="Seno S."/>
            <person name="Sessa L."/>
            <person name="Sheng Y."/>
            <person name="Shibata Y."/>
            <person name="Shimada H."/>
            <person name="Shimada K."/>
            <person name="Silva D."/>
            <person name="Sinclair B."/>
            <person name="Sperling S."/>
            <person name="Stupka E."/>
            <person name="Sugiura K."/>
            <person name="Sultana R."/>
            <person name="Takenaka Y."/>
            <person name="Taki K."/>
            <person name="Tammoja K."/>
            <person name="Tan S.L."/>
            <person name="Tang S."/>
            <person name="Taylor M.S."/>
            <person name="Tegner J."/>
            <person name="Teichmann S.A."/>
            <person name="Ueda H.R."/>
            <person name="van Nimwegen E."/>
            <person name="Verardo R."/>
            <person name="Wei C.L."/>
            <person name="Yagi K."/>
            <person name="Yamanishi H."/>
            <person name="Zabarovsky E."/>
            <person name="Zhu S."/>
            <person name="Zimmer A."/>
            <person name="Hide W."/>
            <person name="Bult C."/>
            <person name="Grimmond S.M."/>
            <person name="Teasdale R.D."/>
            <person name="Liu E.T."/>
            <person name="Brusic V."/>
            <person name="Quackenbush J."/>
            <person name="Wahlestedt C."/>
            <person name="Mattick J.S."/>
            <person name="Hume D.A."/>
            <person name="Kai C."/>
            <person name="Sasaki D."/>
            <person name="Tomaru Y."/>
            <person name="Fukuda S."/>
            <person name="Kanamori-Katayama M."/>
            <person name="Suzuki M."/>
            <person name="Aoki J."/>
            <person name="Arakawa T."/>
            <person name="Iida J."/>
            <person name="Imamura K."/>
            <person name="Itoh M."/>
            <person name="Kato T."/>
            <person name="Kawaji H."/>
            <person name="Kawagashira N."/>
            <person name="Kawashima T."/>
            <person name="Kojima M."/>
            <person name="Kondo S."/>
            <person name="Konno H."/>
            <person name="Nakano K."/>
            <person name="Ninomiya N."/>
            <person name="Nishio T."/>
            <person name="Okada M."/>
            <person name="Plessy C."/>
            <person name="Shibata K."/>
            <person name="Shiraki T."/>
            <person name="Suzuki S."/>
            <person name="Tagami M."/>
            <person name="Waki K."/>
            <person name="Watahiki A."/>
            <person name="Okamura-Oho Y."/>
            <person name="Suzuki H."/>
            <person name="Kawai J."/>
            <person name="Hayashizaki Y."/>
        </authorList>
    </citation>
    <scope>NUCLEOTIDE SEQUENCE [LARGE SCALE MRNA]</scope>
    <source>
        <strain>C57BL/6J</strain>
        <tissue>Kidney</tissue>
    </source>
</reference>
<reference key="2">
    <citation type="journal article" date="2004" name="Genome Res.">
        <title>The status, quality, and expansion of the NIH full-length cDNA project: the Mammalian Gene Collection (MGC).</title>
        <authorList>
            <consortium name="The MGC Project Team"/>
        </authorList>
    </citation>
    <scope>NUCLEOTIDE SEQUENCE [LARGE SCALE MRNA]</scope>
    <source>
        <strain>FVB/N</strain>
        <tissue>Kidney</tissue>
    </source>
</reference>
<reference key="3">
    <citation type="journal article" date="2003" name="J. Biol. Chem.">
        <title>Sequence identification and characterization of human carnosinase and a closely related non-specific dipeptidase.</title>
        <authorList>
            <person name="Teufel M."/>
            <person name="Saudek V."/>
            <person name="Ledig J.P."/>
            <person name="Bernhardt A."/>
            <person name="Boularand S."/>
            <person name="Carreau A."/>
            <person name="Cairns N.J."/>
            <person name="Carter C."/>
            <person name="Cowley D.J."/>
            <person name="Duverger D."/>
            <person name="Ganzhorn A.J."/>
            <person name="Guenet C."/>
            <person name="Heintzelmann B."/>
            <person name="Laucher V."/>
            <person name="Sauvage C."/>
            <person name="Smirnova T."/>
        </authorList>
    </citation>
    <scope>TISSUE SPECIFICITY</scope>
</reference>
<reference key="4">
    <citation type="journal article" date="2014" name="J. Biol. Chem.">
        <title>Metabolite proofreading in carnosine and homocarnosine synthesis: molecular identification of PM20D2 as beta-alanyl-lysine dipeptidase.</title>
        <authorList>
            <person name="Veiga-da-Cunha M."/>
            <person name="Chevalier N."/>
            <person name="Stroobant V."/>
            <person name="Vertommen D."/>
            <person name="Van Schaftingen E."/>
        </authorList>
    </citation>
    <scope>FUNCTION</scope>
    <scope>CATALYTIC ACTIVITY</scope>
    <scope>BIOPHYSICOCHEMICAL PROPERTIES</scope>
</reference>
<reference key="5">
    <citation type="journal article" date="2019" name="Cell Chem. Biol.">
        <title>Family-wide Annotation of Enzymatic Pathways by Parallel In Vivo Metabolomics.</title>
        <authorList>
            <person name="Kim J.T."/>
            <person name="Li V.L."/>
            <person name="Terrell S.M."/>
            <person name="Fischer C.R."/>
            <person name="Long J.Z."/>
        </authorList>
    </citation>
    <scope>FUNCTION</scope>
    <scope>CATALYTIC ACTIVITY</scope>
</reference>